<dbReference type="EMBL" id="M35052">
    <property type="protein sequence ID" value="AAA42187.1"/>
    <property type="molecule type" value="mRNA"/>
</dbReference>
<dbReference type="EMBL" id="BC063808">
    <property type="protein sequence ID" value="AAH63808.1"/>
    <property type="molecule type" value="mRNA"/>
</dbReference>
<dbReference type="PIR" id="A35340">
    <property type="entry name" value="A35340"/>
</dbReference>
<dbReference type="RefSeq" id="NP_599192.1">
    <property type="nucleotide sequence ID" value="NM_134365.2"/>
</dbReference>
<dbReference type="RefSeq" id="XP_003749420.1">
    <property type="nucleotide sequence ID" value="XM_003749372.2"/>
</dbReference>
<dbReference type="SMR" id="P19511"/>
<dbReference type="BioGRID" id="251213">
    <property type="interactions" value="3"/>
</dbReference>
<dbReference type="CORUM" id="P19511"/>
<dbReference type="FunCoup" id="P19511">
    <property type="interactions" value="2184"/>
</dbReference>
<dbReference type="IntAct" id="P19511">
    <property type="interactions" value="7"/>
</dbReference>
<dbReference type="MINT" id="P19511"/>
<dbReference type="STRING" id="10116.ENSRNOP00000021920"/>
<dbReference type="CarbonylDB" id="P19511"/>
<dbReference type="GlyGen" id="P19511">
    <property type="glycosylation" value="2 sites, 1 O-linked glycan (2 sites)"/>
</dbReference>
<dbReference type="iPTMnet" id="P19511"/>
<dbReference type="PhosphoSitePlus" id="P19511"/>
<dbReference type="SwissPalm" id="P19511"/>
<dbReference type="jPOST" id="P19511"/>
<dbReference type="PaxDb" id="10116-ENSRNOP00000021920"/>
<dbReference type="Ensembl" id="ENSRNOT00000021920.7">
    <property type="protein sequence ID" value="ENSRNOP00000021920.4"/>
    <property type="gene ID" value="ENSRNOG00000064742.1"/>
</dbReference>
<dbReference type="GeneID" id="171375"/>
<dbReference type="KEGG" id="rno:171375"/>
<dbReference type="UCSC" id="RGD:620041">
    <property type="organism name" value="rat"/>
</dbReference>
<dbReference type="AGR" id="RGD:620041"/>
<dbReference type="CTD" id="515"/>
<dbReference type="RGD" id="620041">
    <property type="gene designation" value="Atp5pb"/>
</dbReference>
<dbReference type="eggNOG" id="KOG3976">
    <property type="taxonomic scope" value="Eukaryota"/>
</dbReference>
<dbReference type="GeneTree" id="ENSGT00390000001958"/>
<dbReference type="HOGENOM" id="CLU_087186_1_0_1"/>
<dbReference type="InParanoid" id="P19511"/>
<dbReference type="OrthoDB" id="57498at9989"/>
<dbReference type="PhylomeDB" id="P19511"/>
<dbReference type="TreeFam" id="TF313250"/>
<dbReference type="Reactome" id="R-RNO-163210">
    <property type="pathway name" value="Formation of ATP by chemiosmotic coupling"/>
</dbReference>
<dbReference type="Reactome" id="R-RNO-8949613">
    <property type="pathway name" value="Cristae formation"/>
</dbReference>
<dbReference type="PRO" id="PR:P19511"/>
<dbReference type="Proteomes" id="UP000002494">
    <property type="component" value="Chromosome 2"/>
</dbReference>
<dbReference type="Bgee" id="ENSRNOG00000016000">
    <property type="expression patterns" value="Expressed in heart and 19 other cell types or tissues"/>
</dbReference>
<dbReference type="ExpressionAtlas" id="P19511">
    <property type="expression patterns" value="baseline"/>
</dbReference>
<dbReference type="GO" id="GO:0005743">
    <property type="term" value="C:mitochondrial inner membrane"/>
    <property type="evidence" value="ECO:0007669"/>
    <property type="project" value="UniProtKB-SubCell"/>
</dbReference>
<dbReference type="GO" id="GO:0045259">
    <property type="term" value="C:proton-transporting ATP synthase complex"/>
    <property type="evidence" value="ECO:0000314"/>
    <property type="project" value="UniProtKB"/>
</dbReference>
<dbReference type="GO" id="GO:0044877">
    <property type="term" value="F:protein-containing complex binding"/>
    <property type="evidence" value="ECO:0000314"/>
    <property type="project" value="RGD"/>
</dbReference>
<dbReference type="GO" id="GO:0015078">
    <property type="term" value="F:proton transmembrane transporter activity"/>
    <property type="evidence" value="ECO:0007669"/>
    <property type="project" value="InterPro"/>
</dbReference>
<dbReference type="GO" id="GO:0071456">
    <property type="term" value="P:cellular response to hypoxia"/>
    <property type="evidence" value="ECO:0000270"/>
    <property type="project" value="RGD"/>
</dbReference>
<dbReference type="GO" id="GO:0015986">
    <property type="term" value="P:proton motive force-driven ATP synthesis"/>
    <property type="evidence" value="ECO:0000318"/>
    <property type="project" value="GO_Central"/>
</dbReference>
<dbReference type="GO" id="GO:0042776">
    <property type="term" value="P:proton motive force-driven mitochondrial ATP synthesis"/>
    <property type="evidence" value="ECO:0000266"/>
    <property type="project" value="RGD"/>
</dbReference>
<dbReference type="FunFam" id="1.20.5.2210:FF:000001">
    <property type="entry name" value="ATP synthase F(0) complex subunit B1, mitochondrial"/>
    <property type="match status" value="1"/>
</dbReference>
<dbReference type="Gene3D" id="1.20.5.2210">
    <property type="match status" value="1"/>
</dbReference>
<dbReference type="InterPro" id="IPR008688">
    <property type="entry name" value="ATP_synth_Bsub_B/MI25"/>
</dbReference>
<dbReference type="InterPro" id="IPR013837">
    <property type="entry name" value="ATP_synth_F0_suB"/>
</dbReference>
<dbReference type="PANTHER" id="PTHR12733:SF3">
    <property type="entry name" value="ATP SYNTHASE F(0) COMPLEX SUBUNIT B1, MITOCHONDRIAL"/>
    <property type="match status" value="1"/>
</dbReference>
<dbReference type="PANTHER" id="PTHR12733">
    <property type="entry name" value="MITOCHONDRIAL ATP SYNTHASE B CHAIN"/>
    <property type="match status" value="1"/>
</dbReference>
<dbReference type="Pfam" id="PF05405">
    <property type="entry name" value="Mt_ATP-synt_B"/>
    <property type="match status" value="1"/>
</dbReference>
<dbReference type="SUPFAM" id="SSF161060">
    <property type="entry name" value="ATP synthase B chain-like"/>
    <property type="match status" value="1"/>
</dbReference>
<reference key="1">
    <citation type="journal article" date="1990" name="Biochem. Biophys. Res. Commun.">
        <title>cDNA cloning and sequencing for the import precursor of subunit B in H(+)-ATP synthase from rat mitochondria.</title>
        <authorList>
            <person name="Tsurumi C."/>
            <person name="Yoshihara Y."/>
            <person name="Osaka F."/>
            <person name="Yamada F."/>
            <person name="Tani I."/>
            <person name="Higuti T."/>
            <person name="Shimizu M."/>
            <person name="Oeda K."/>
            <person name="Ohkawa H."/>
            <person name="Toda H."/>
            <person name="Kakuno T."/>
            <person name="Sakiyama F."/>
            <person name="Kumatori A."/>
            <person name="Tanaka K."/>
            <person name="Ichihara A."/>
        </authorList>
    </citation>
    <scope>NUCLEOTIDE SEQUENCE [MRNA]</scope>
</reference>
<reference key="2">
    <citation type="journal article" date="2004" name="Genome Res.">
        <title>The status, quality, and expansion of the NIH full-length cDNA project: the Mammalian Gene Collection (MGC).</title>
        <authorList>
            <consortium name="The MGC Project Team"/>
        </authorList>
    </citation>
    <scope>NUCLEOTIDE SEQUENCE [LARGE SCALE MRNA]</scope>
    <source>
        <tissue>Pituitary</tissue>
    </source>
</reference>
<reference key="3">
    <citation type="journal article" date="2007" name="Mol. Cell. Proteomics">
        <title>Identification of two proteins associated with mammalian ATP synthase.</title>
        <authorList>
            <person name="Meyer B."/>
            <person name="Wittig I."/>
            <person name="Trifilieff E."/>
            <person name="Karas M."/>
            <person name="Schaegger H."/>
        </authorList>
    </citation>
    <scope>IDENTIFICATION BY MASS SPECTROMETRY</scope>
    <scope>IDENTIFICATION IN THE ATP SYNTHASE COMPLEX</scope>
</reference>
<proteinExistence type="evidence at protein level"/>
<accession>P19511</accession>
<feature type="transit peptide" description="Mitochondrion">
    <location>
        <begin position="1"/>
        <end position="42"/>
    </location>
</feature>
<feature type="chain" id="PRO_0000002516" description="ATP synthase peripheral stalk subunit b, mitochondrial">
    <location>
        <begin position="43"/>
        <end position="256"/>
    </location>
</feature>
<feature type="modified residue" description="N6-succinyllysine" evidence="4">
    <location>
        <position position="131"/>
    </location>
</feature>
<feature type="modified residue" description="N6-acetyllysine" evidence="4">
    <location>
        <position position="139"/>
    </location>
</feature>
<feature type="modified residue" description="N6-acetyllysine" evidence="4">
    <location>
        <position position="154"/>
    </location>
</feature>
<feature type="modified residue" description="N6-acetyllysine" evidence="4">
    <location>
        <position position="162"/>
    </location>
</feature>
<feature type="modified residue" description="N6-acetyllysine" evidence="3">
    <location>
        <position position="221"/>
    </location>
</feature>
<feature type="modified residue" description="N6-acetyllysine" evidence="3">
    <location>
        <position position="233"/>
    </location>
</feature>
<feature type="modified residue" description="N6-acetyllysine" evidence="4">
    <location>
        <position position="244"/>
    </location>
</feature>
<protein>
    <recommendedName>
        <fullName evidence="6">ATP synthase peripheral stalk subunit b, mitochondrial</fullName>
    </recommendedName>
    <alternativeName>
        <fullName evidence="6">ATP synthase F(0) complex subunit B1, mitochondrial</fullName>
    </alternativeName>
    <alternativeName>
        <fullName evidence="6">ATP synthase peripheral stalk-membrane subunit b</fullName>
    </alternativeName>
    <alternativeName>
        <fullName>ATP synthase subunit b</fullName>
        <shortName>ATPase subunit b</shortName>
    </alternativeName>
</protein>
<organism>
    <name type="scientific">Rattus norvegicus</name>
    <name type="common">Rat</name>
    <dbReference type="NCBI Taxonomy" id="10116"/>
    <lineage>
        <taxon>Eukaryota</taxon>
        <taxon>Metazoa</taxon>
        <taxon>Chordata</taxon>
        <taxon>Craniata</taxon>
        <taxon>Vertebrata</taxon>
        <taxon>Euteleostomi</taxon>
        <taxon>Mammalia</taxon>
        <taxon>Eutheria</taxon>
        <taxon>Euarchontoglires</taxon>
        <taxon>Glires</taxon>
        <taxon>Rodentia</taxon>
        <taxon>Myomorpha</taxon>
        <taxon>Muroidea</taxon>
        <taxon>Muridae</taxon>
        <taxon>Murinae</taxon>
        <taxon>Rattus</taxon>
    </lineage>
</organism>
<keyword id="KW-0007">Acetylation</keyword>
<keyword id="KW-0138">CF(0)</keyword>
<keyword id="KW-0375">Hydrogen ion transport</keyword>
<keyword id="KW-0406">Ion transport</keyword>
<keyword id="KW-0472">Membrane</keyword>
<keyword id="KW-0496">Mitochondrion</keyword>
<keyword id="KW-0999">Mitochondrion inner membrane</keyword>
<keyword id="KW-1185">Reference proteome</keyword>
<keyword id="KW-0809">Transit peptide</keyword>
<keyword id="KW-0813">Transport</keyword>
<evidence type="ECO:0000250" key="1">
    <source>
        <dbReference type="UniProtKB" id="P13619"/>
    </source>
</evidence>
<evidence type="ECO:0000250" key="2">
    <source>
        <dbReference type="UniProtKB" id="P19483"/>
    </source>
</evidence>
<evidence type="ECO:0000250" key="3">
    <source>
        <dbReference type="UniProtKB" id="P24539"/>
    </source>
</evidence>
<evidence type="ECO:0000250" key="4">
    <source>
        <dbReference type="UniProtKB" id="Q9CQQ7"/>
    </source>
</evidence>
<evidence type="ECO:0000269" key="5">
    <source>
    </source>
</evidence>
<evidence type="ECO:0000305" key="6"/>
<evidence type="ECO:0000312" key="7">
    <source>
        <dbReference type="RGD" id="620041"/>
    </source>
</evidence>
<comment type="function">
    <text evidence="1 2 3">Subunit b, of the mitochondrial membrane ATP synthase complex (F(1)F(0) ATP synthase or Complex V) that produces ATP from ADP in the presence of a proton gradient across the membrane which is generated by electron transport complexes of the respiratory chain. ATP synthase complex consist of a soluble F(1) head domain - the catalytic core - and a membrane F(1) domain - the membrane proton channel. These two domains are linked by a central stalk rotating inside the F(1) region and a stationary peripheral stalk. During catalysis, ATP synthesis in the catalytic domain of F(1) is coupled via a rotary mechanism of the central stalk subunits to proton translocation (By similarity). In vivo, can only synthesize ATP although its ATP hydrolase activity can be activated artificially in vitro (By similarity). Part of the complex F(0) domain (By similarity). Part of the complex F(0) domain and the peripheric stalk, which acts as a stator to hold the catalytic alpha(3)beta(3) subcomplex and subunit a/ATP6 static relative to the rotary elements (By similarity).</text>
</comment>
<comment type="subunit">
    <text evidence="3 5">Component of the ATP synthase complex composed at least of ATP5F1A/subunit alpha, ATP5F1B/subunit beta, ATP5MC1/subunit c (homooctomer), MT-ATP6/subunit a, MT-ATP8/subunit 8, ATP5ME/subunit e, ATP5MF/subunit f, ATP5MG/subunit g, ATP5MK/subunit k, ATP5MJ/subunit j, ATP5F1C/subunit gamma, ATP5F1D/subunit delta, ATP5F1E/subunit epsilon, ATP5PF/subunit F6, ATP5PB/subunit b, ATP5PD/subunit d, ATP5PO/subunit OSCP (PubMed:17575325). ATP synthase complex consists of a soluble F(1) head domain (subunits alpha(3) and beta(3)) - the catalytic core - and a membrane F(0) domain - the membrane proton channel (subunits c, a, 8, e, f, g, k and j). These two domains are linked by a central stalk (subunits gamma, delta, and epsilon) rotating inside the F1 region and a stationary peripheral stalk (subunits F6, b, d, and OSCP) (By similarity).</text>
</comment>
<comment type="subcellular location">
    <subcellularLocation>
        <location>Mitochondrion</location>
    </subcellularLocation>
    <subcellularLocation>
        <location>Mitochondrion inner membrane</location>
    </subcellularLocation>
</comment>
<comment type="similarity">
    <text evidence="6">Belongs to the eukaryotic ATPase B chain family.</text>
</comment>
<gene>
    <name evidence="7" type="primary">Atp5pb</name>
    <name type="synonym">Atp5f</name>
    <name type="synonym">Atp5f1</name>
</gene>
<sequence>MLSRVVLSAAATAAPCLKNAAVLGPGVLQATRVFHTGQPRLAPLPPLPEYGGKVRLGLIPEEFFQFLYPKTGVTGPYVLGTGLSLYFLSKEIYVITPETFSTISVVGLIVYVIKKYGASIGEFIDKLNEEKIAQLEEIKQSSMKQIQDAINREKAQQALVQKRHYLFDVQRNNIALALEVTYRERLHKAYKEVKNRLDYHISVQDMMRRKEGEHMINWVEKHVIQSISAQQEKETIAKCIGDLKMLAKKAQAQPIM</sequence>
<name>AT5F1_RAT</name>